<accession>A8GYY9</accession>
<name>RS14_SHEPA</name>
<gene>
    <name evidence="1" type="primary">rpsN</name>
    <name type="ordered locus">Spea_0197</name>
</gene>
<organism>
    <name type="scientific">Shewanella pealeana (strain ATCC 700345 / ANG-SQ1)</name>
    <dbReference type="NCBI Taxonomy" id="398579"/>
    <lineage>
        <taxon>Bacteria</taxon>
        <taxon>Pseudomonadati</taxon>
        <taxon>Pseudomonadota</taxon>
        <taxon>Gammaproteobacteria</taxon>
        <taxon>Alteromonadales</taxon>
        <taxon>Shewanellaceae</taxon>
        <taxon>Shewanella</taxon>
    </lineage>
</organism>
<feature type="chain" id="PRO_1000128578" description="Small ribosomal subunit protein uS14">
    <location>
        <begin position="1"/>
        <end position="101"/>
    </location>
</feature>
<comment type="function">
    <text evidence="1">Binds 16S rRNA, required for the assembly of 30S particles and may also be responsible for determining the conformation of the 16S rRNA at the A site.</text>
</comment>
<comment type="subunit">
    <text evidence="1">Part of the 30S ribosomal subunit. Contacts proteins S3 and S10.</text>
</comment>
<comment type="similarity">
    <text evidence="1">Belongs to the universal ribosomal protein uS14 family.</text>
</comment>
<sequence>MAKSSMKAREAKRAQLVAKFAEKRAALKAIISSPTTSDDDRWDAVLKLQALPRDSSAARQRNRCSQTGRPHGFLRKFGLSRIKLREATMRGEVPGLRKASW</sequence>
<protein>
    <recommendedName>
        <fullName evidence="1">Small ribosomal subunit protein uS14</fullName>
    </recommendedName>
    <alternativeName>
        <fullName evidence="2">30S ribosomal protein S14</fullName>
    </alternativeName>
</protein>
<evidence type="ECO:0000255" key="1">
    <source>
        <dbReference type="HAMAP-Rule" id="MF_00537"/>
    </source>
</evidence>
<evidence type="ECO:0000305" key="2"/>
<proteinExistence type="inferred from homology"/>
<reference key="1">
    <citation type="submission" date="2007-10" db="EMBL/GenBank/DDBJ databases">
        <title>Complete sequence of Shewanella pealeana ATCC 700345.</title>
        <authorList>
            <consortium name="US DOE Joint Genome Institute"/>
            <person name="Copeland A."/>
            <person name="Lucas S."/>
            <person name="Lapidus A."/>
            <person name="Barry K."/>
            <person name="Glavina del Rio T."/>
            <person name="Dalin E."/>
            <person name="Tice H."/>
            <person name="Pitluck S."/>
            <person name="Chertkov O."/>
            <person name="Brettin T."/>
            <person name="Bruce D."/>
            <person name="Detter J.C."/>
            <person name="Han C."/>
            <person name="Schmutz J."/>
            <person name="Larimer F."/>
            <person name="Land M."/>
            <person name="Hauser L."/>
            <person name="Kyrpides N."/>
            <person name="Kim E."/>
            <person name="Zhao J.-S.Z."/>
            <person name="Manno D."/>
            <person name="Hawari J."/>
            <person name="Richardson P."/>
        </authorList>
    </citation>
    <scope>NUCLEOTIDE SEQUENCE [LARGE SCALE GENOMIC DNA]</scope>
    <source>
        <strain>ATCC 700345 / ANG-SQ1</strain>
    </source>
</reference>
<dbReference type="EMBL" id="CP000851">
    <property type="protein sequence ID" value="ABV85526.1"/>
    <property type="molecule type" value="Genomic_DNA"/>
</dbReference>
<dbReference type="RefSeq" id="WP_012153467.1">
    <property type="nucleotide sequence ID" value="NC_009901.1"/>
</dbReference>
<dbReference type="SMR" id="A8GYY9"/>
<dbReference type="STRING" id="398579.Spea_0197"/>
<dbReference type="KEGG" id="spl:Spea_0197"/>
<dbReference type="eggNOG" id="COG0199">
    <property type="taxonomic scope" value="Bacteria"/>
</dbReference>
<dbReference type="HOGENOM" id="CLU_139869_0_1_6"/>
<dbReference type="OrthoDB" id="9810484at2"/>
<dbReference type="Proteomes" id="UP000002608">
    <property type="component" value="Chromosome"/>
</dbReference>
<dbReference type="GO" id="GO:0005737">
    <property type="term" value="C:cytoplasm"/>
    <property type="evidence" value="ECO:0007669"/>
    <property type="project" value="UniProtKB-ARBA"/>
</dbReference>
<dbReference type="GO" id="GO:0015935">
    <property type="term" value="C:small ribosomal subunit"/>
    <property type="evidence" value="ECO:0007669"/>
    <property type="project" value="TreeGrafter"/>
</dbReference>
<dbReference type="GO" id="GO:0019843">
    <property type="term" value="F:rRNA binding"/>
    <property type="evidence" value="ECO:0007669"/>
    <property type="project" value="UniProtKB-UniRule"/>
</dbReference>
<dbReference type="GO" id="GO:0003735">
    <property type="term" value="F:structural constituent of ribosome"/>
    <property type="evidence" value="ECO:0007669"/>
    <property type="project" value="InterPro"/>
</dbReference>
<dbReference type="GO" id="GO:0006412">
    <property type="term" value="P:translation"/>
    <property type="evidence" value="ECO:0007669"/>
    <property type="project" value="UniProtKB-UniRule"/>
</dbReference>
<dbReference type="FunFam" id="1.10.287.1480:FF:000001">
    <property type="entry name" value="30S ribosomal protein S14"/>
    <property type="match status" value="1"/>
</dbReference>
<dbReference type="Gene3D" id="1.10.287.1480">
    <property type="match status" value="1"/>
</dbReference>
<dbReference type="HAMAP" id="MF_00537">
    <property type="entry name" value="Ribosomal_uS14_1"/>
    <property type="match status" value="1"/>
</dbReference>
<dbReference type="InterPro" id="IPR001209">
    <property type="entry name" value="Ribosomal_uS14"/>
</dbReference>
<dbReference type="InterPro" id="IPR023036">
    <property type="entry name" value="Ribosomal_uS14_bac/plastid"/>
</dbReference>
<dbReference type="InterPro" id="IPR018271">
    <property type="entry name" value="Ribosomal_uS14_CS"/>
</dbReference>
<dbReference type="NCBIfam" id="NF006477">
    <property type="entry name" value="PRK08881.1"/>
    <property type="match status" value="1"/>
</dbReference>
<dbReference type="PANTHER" id="PTHR19836">
    <property type="entry name" value="30S RIBOSOMAL PROTEIN S14"/>
    <property type="match status" value="1"/>
</dbReference>
<dbReference type="PANTHER" id="PTHR19836:SF19">
    <property type="entry name" value="SMALL RIBOSOMAL SUBUNIT PROTEIN US14M"/>
    <property type="match status" value="1"/>
</dbReference>
<dbReference type="Pfam" id="PF00253">
    <property type="entry name" value="Ribosomal_S14"/>
    <property type="match status" value="1"/>
</dbReference>
<dbReference type="SUPFAM" id="SSF57716">
    <property type="entry name" value="Glucocorticoid receptor-like (DNA-binding domain)"/>
    <property type="match status" value="1"/>
</dbReference>
<dbReference type="PROSITE" id="PS00527">
    <property type="entry name" value="RIBOSOMAL_S14"/>
    <property type="match status" value="1"/>
</dbReference>
<keyword id="KW-1185">Reference proteome</keyword>
<keyword id="KW-0687">Ribonucleoprotein</keyword>
<keyword id="KW-0689">Ribosomal protein</keyword>
<keyword id="KW-0694">RNA-binding</keyword>
<keyword id="KW-0699">rRNA-binding</keyword>